<sequence>MDNSYNLNEQSSWNGISSEKKKNYLASEDHGQKILSVLQSFREQNVFYDFKIIMKEEIIPCHRCVLAACSDFFRAMFEVNMKERDDGSVTITNLSSKAVKAFLDYAYTGKTRITDDNVEMFFQLSSFLQVSFLSKACSDFLIKSISLVNCLHLLSLSDSYGSAQLFSHTLYFVQHHFHLLYKSSDFLEMNFGVLQKCLESDELNVPEEEMVLKAVLTWIKYNLESRQKHLPHLITKVRLHQLSEDTLQDYLLNEEYLLKSTNCFDIIVDAIKCVQGSSGLFPDARPSTTEKYIFIHKTEENGENQYTFCYNIKTDSWKILPQSHLIDLPGSSLSSYGEKIFLTGGCKGKCCRRIRLHIAQSYHDATDQTWCYCPAKNEFFCVSAMKTPRTMHTSVMALNRLFVIGGKTRGSQDIKSLLDVESYNPLSREWTSVSPLPRGIYYPEASACQNIIYVLGSEVEIADAFNPSLDCFFKYNATTDQWSELVAEFGQFFHATLIKAVPVNCTLYICDLSTYKVYSFCPDTCVWKGEGSFECAGFNAGAIGIEDKIYILGGDYAPDEITDEVQVYHSSRSEWEEVSPMPRALTEFYCQVIQFNKYRDPWYSNHF</sequence>
<accession>Q8BHI4</accession>
<accession>Q8BNJ8</accession>
<dbReference type="EMBL" id="AK034334">
    <property type="protein sequence ID" value="BAC28678.1"/>
    <property type="molecule type" value="mRNA"/>
</dbReference>
<dbReference type="EMBL" id="AK078744">
    <property type="protein sequence ID" value="BAC37374.1"/>
    <property type="molecule type" value="mRNA"/>
</dbReference>
<dbReference type="EMBL" id="AK083497">
    <property type="protein sequence ID" value="BAC38935.1"/>
    <property type="molecule type" value="mRNA"/>
</dbReference>
<dbReference type="EMBL" id="BC027392">
    <property type="protein sequence ID" value="AAH27392.1"/>
    <property type="molecule type" value="mRNA"/>
</dbReference>
<dbReference type="CCDS" id="CCDS22795.1"/>
<dbReference type="RefSeq" id="NP_001158046.1">
    <property type="nucleotide sequence ID" value="NM_001164574.2"/>
</dbReference>
<dbReference type="RefSeq" id="NP_001420236.1">
    <property type="nucleotide sequence ID" value="NM_001433307.1"/>
</dbReference>
<dbReference type="RefSeq" id="NP_001420237.1">
    <property type="nucleotide sequence ID" value="NM_001433308.1"/>
</dbReference>
<dbReference type="RefSeq" id="NP_001420238.1">
    <property type="nucleotide sequence ID" value="NM_001433309.1"/>
</dbReference>
<dbReference type="RefSeq" id="NP_001420239.1">
    <property type="nucleotide sequence ID" value="NM_001433310.1"/>
</dbReference>
<dbReference type="RefSeq" id="NP_081238.2">
    <property type="nucleotide sequence ID" value="NM_026962.4"/>
</dbReference>
<dbReference type="RefSeq" id="XP_011240669.1">
    <property type="nucleotide sequence ID" value="XM_011242367.2"/>
</dbReference>
<dbReference type="RefSeq" id="XP_011240670.1">
    <property type="nucleotide sequence ID" value="XM_011242368.1"/>
</dbReference>
<dbReference type="RefSeq" id="XP_030100419.1">
    <property type="nucleotide sequence ID" value="XM_030244559.1"/>
</dbReference>
<dbReference type="RefSeq" id="XP_036011133.1">
    <property type="nucleotide sequence ID" value="XM_036155240.1"/>
</dbReference>
<dbReference type="SMR" id="Q8BHI4"/>
<dbReference type="FunCoup" id="Q8BHI4">
    <property type="interactions" value="11"/>
</dbReference>
<dbReference type="STRING" id="10090.ENSMUSP00000148445"/>
<dbReference type="PhosphoSitePlus" id="Q8BHI4"/>
<dbReference type="jPOST" id="Q8BHI4"/>
<dbReference type="PaxDb" id="10090-ENSMUSP00000050183"/>
<dbReference type="ProteomicsDB" id="263576"/>
<dbReference type="Antibodypedia" id="54357">
    <property type="antibodies" value="90 antibodies from 16 providers"/>
</dbReference>
<dbReference type="DNASU" id="69149"/>
<dbReference type="Ensembl" id="ENSMUST00000049648.9">
    <property type="protein sequence ID" value="ENSMUSP00000050183.8"/>
    <property type="gene ID" value="ENSMUSG00000025893.9"/>
</dbReference>
<dbReference type="Ensembl" id="ENSMUST00000212221.2">
    <property type="protein sequence ID" value="ENSMUSP00000148445.2"/>
    <property type="gene ID" value="ENSMUSG00000025893.9"/>
</dbReference>
<dbReference type="GeneID" id="69149"/>
<dbReference type="KEGG" id="mmu:69149"/>
<dbReference type="UCSC" id="uc009obj.2">
    <property type="organism name" value="mouse"/>
</dbReference>
<dbReference type="AGR" id="MGI:1916399"/>
<dbReference type="CTD" id="143879"/>
<dbReference type="MGI" id="MGI:1916399">
    <property type="gene designation" value="Kbtbd3"/>
</dbReference>
<dbReference type="VEuPathDB" id="HostDB:ENSMUSG00000025893"/>
<dbReference type="eggNOG" id="KOG4441">
    <property type="taxonomic scope" value="Eukaryota"/>
</dbReference>
<dbReference type="GeneTree" id="ENSGT00940000158415"/>
<dbReference type="HOGENOM" id="CLU_004253_14_6_1"/>
<dbReference type="InParanoid" id="Q8BHI4"/>
<dbReference type="OMA" id="KGKCCRK"/>
<dbReference type="OrthoDB" id="25620at2759"/>
<dbReference type="PhylomeDB" id="Q8BHI4"/>
<dbReference type="TreeFam" id="TF329218"/>
<dbReference type="BioGRID-ORCS" id="69149">
    <property type="hits" value="1 hit in 76 CRISPR screens"/>
</dbReference>
<dbReference type="ChiTaRS" id="Kbtbd3">
    <property type="organism name" value="mouse"/>
</dbReference>
<dbReference type="PRO" id="PR:Q8BHI4"/>
<dbReference type="Proteomes" id="UP000000589">
    <property type="component" value="Chromosome 9"/>
</dbReference>
<dbReference type="RNAct" id="Q8BHI4">
    <property type="molecule type" value="protein"/>
</dbReference>
<dbReference type="Bgee" id="ENSMUSG00000025893">
    <property type="expression patterns" value="Expressed in interventricular septum and 124 other cell types or tissues"/>
</dbReference>
<dbReference type="CDD" id="cd18480">
    <property type="entry name" value="BACK_KBTBD3"/>
    <property type="match status" value="1"/>
</dbReference>
<dbReference type="CDD" id="cd18271">
    <property type="entry name" value="BTB_POZ_KBTBD3_BKLHD3"/>
    <property type="match status" value="1"/>
</dbReference>
<dbReference type="FunFam" id="1.25.40.420:FF:000001">
    <property type="entry name" value="Kelch-like family member 12"/>
    <property type="match status" value="1"/>
</dbReference>
<dbReference type="Gene3D" id="1.25.40.420">
    <property type="match status" value="1"/>
</dbReference>
<dbReference type="Gene3D" id="2.120.10.80">
    <property type="entry name" value="Kelch-type beta propeller"/>
    <property type="match status" value="2"/>
</dbReference>
<dbReference type="Gene3D" id="3.30.710.10">
    <property type="entry name" value="Potassium Channel Kv1.1, Chain A"/>
    <property type="match status" value="1"/>
</dbReference>
<dbReference type="InterPro" id="IPR011705">
    <property type="entry name" value="BACK"/>
</dbReference>
<dbReference type="InterPro" id="IPR017096">
    <property type="entry name" value="BTB-kelch_protein"/>
</dbReference>
<dbReference type="InterPro" id="IPR000210">
    <property type="entry name" value="BTB/POZ_dom"/>
</dbReference>
<dbReference type="InterPro" id="IPR030589">
    <property type="entry name" value="BTB/POZ_KBTBD3"/>
</dbReference>
<dbReference type="InterPro" id="IPR047062">
    <property type="entry name" value="KBTBD3_BACK"/>
</dbReference>
<dbReference type="InterPro" id="IPR015915">
    <property type="entry name" value="Kelch-typ_b-propeller"/>
</dbReference>
<dbReference type="InterPro" id="IPR006652">
    <property type="entry name" value="Kelch_1"/>
</dbReference>
<dbReference type="InterPro" id="IPR011333">
    <property type="entry name" value="SKP1/BTB/POZ_sf"/>
</dbReference>
<dbReference type="PANTHER" id="PTHR24412">
    <property type="entry name" value="KELCH PROTEIN"/>
    <property type="match status" value="1"/>
</dbReference>
<dbReference type="PANTHER" id="PTHR24412:SF418">
    <property type="entry name" value="KELCH REPEAT AND BTB DOMAIN-CONTAINING PROTEIN 3"/>
    <property type="match status" value="1"/>
</dbReference>
<dbReference type="Pfam" id="PF07707">
    <property type="entry name" value="BACK"/>
    <property type="match status" value="1"/>
</dbReference>
<dbReference type="Pfam" id="PF00651">
    <property type="entry name" value="BTB"/>
    <property type="match status" value="1"/>
</dbReference>
<dbReference type="Pfam" id="PF01344">
    <property type="entry name" value="Kelch_1"/>
    <property type="match status" value="2"/>
</dbReference>
<dbReference type="PIRSF" id="PIRSF037037">
    <property type="entry name" value="Kelch-like_protein_gigaxonin"/>
    <property type="match status" value="1"/>
</dbReference>
<dbReference type="SMART" id="SM00875">
    <property type="entry name" value="BACK"/>
    <property type="match status" value="1"/>
</dbReference>
<dbReference type="SMART" id="SM00225">
    <property type="entry name" value="BTB"/>
    <property type="match status" value="1"/>
</dbReference>
<dbReference type="SMART" id="SM00612">
    <property type="entry name" value="Kelch"/>
    <property type="match status" value="3"/>
</dbReference>
<dbReference type="SUPFAM" id="SSF117281">
    <property type="entry name" value="Kelch motif"/>
    <property type="match status" value="1"/>
</dbReference>
<dbReference type="SUPFAM" id="SSF54695">
    <property type="entry name" value="POZ domain"/>
    <property type="match status" value="1"/>
</dbReference>
<dbReference type="PROSITE" id="PS50097">
    <property type="entry name" value="BTB"/>
    <property type="match status" value="1"/>
</dbReference>
<feature type="chain" id="PRO_0000119079" description="Kelch repeat and BTB domain-containing protein 3">
    <location>
        <begin position="1"/>
        <end position="607"/>
    </location>
</feature>
<feature type="domain" description="BTB" evidence="2">
    <location>
        <begin position="48"/>
        <end position="115"/>
    </location>
</feature>
<feature type="domain" description="BACK" evidence="1">
    <location>
        <begin position="150"/>
        <end position="250"/>
    </location>
</feature>
<feature type="repeat" description="Kelch 1" evidence="1">
    <location>
        <begin position="291"/>
        <end position="337"/>
    </location>
</feature>
<feature type="repeat" description="Kelch 2" evidence="1">
    <location>
        <begin position="339"/>
        <end position="390"/>
    </location>
</feature>
<feature type="repeat" description="Kelch 3" evidence="1">
    <location>
        <begin position="400"/>
        <end position="450"/>
    </location>
</feature>
<feature type="repeat" description="Kelch 4" evidence="1">
    <location>
        <begin position="452"/>
        <end position="502"/>
    </location>
</feature>
<feature type="repeat" description="Kelch 5" evidence="1">
    <location>
        <begin position="548"/>
        <end position="595"/>
    </location>
</feature>
<feature type="sequence conflict" description="In Ref. 1; BAC38935." evidence="3" ref="1">
    <original>I</original>
    <variation>M</variation>
    <location>
        <position position="440"/>
    </location>
</feature>
<organism>
    <name type="scientific">Mus musculus</name>
    <name type="common">Mouse</name>
    <dbReference type="NCBI Taxonomy" id="10090"/>
    <lineage>
        <taxon>Eukaryota</taxon>
        <taxon>Metazoa</taxon>
        <taxon>Chordata</taxon>
        <taxon>Craniata</taxon>
        <taxon>Vertebrata</taxon>
        <taxon>Euteleostomi</taxon>
        <taxon>Mammalia</taxon>
        <taxon>Eutheria</taxon>
        <taxon>Euarchontoglires</taxon>
        <taxon>Glires</taxon>
        <taxon>Rodentia</taxon>
        <taxon>Myomorpha</taxon>
        <taxon>Muroidea</taxon>
        <taxon>Muridae</taxon>
        <taxon>Murinae</taxon>
        <taxon>Mus</taxon>
        <taxon>Mus</taxon>
    </lineage>
</organism>
<gene>
    <name evidence="4" type="primary">Kbtbd3</name>
    <name type="synonym">Bklhd3</name>
</gene>
<name>KBTB3_MOUSE</name>
<keyword id="KW-0880">Kelch repeat</keyword>
<keyword id="KW-1185">Reference proteome</keyword>
<keyword id="KW-0677">Repeat</keyword>
<protein>
    <recommendedName>
        <fullName evidence="3">Kelch repeat and BTB domain-containing protein 3</fullName>
    </recommendedName>
    <alternativeName>
        <fullName>BTB and kelch domain-containing protein 3</fullName>
    </alternativeName>
</protein>
<proteinExistence type="evidence at transcript level"/>
<evidence type="ECO:0000255" key="1"/>
<evidence type="ECO:0000255" key="2">
    <source>
        <dbReference type="PROSITE-ProRule" id="PRU00037"/>
    </source>
</evidence>
<evidence type="ECO:0000305" key="3"/>
<evidence type="ECO:0000312" key="4">
    <source>
        <dbReference type="MGI" id="MGI:1916399"/>
    </source>
</evidence>
<reference key="1">
    <citation type="journal article" date="2005" name="Science">
        <title>The transcriptional landscape of the mammalian genome.</title>
        <authorList>
            <person name="Carninci P."/>
            <person name="Kasukawa T."/>
            <person name="Katayama S."/>
            <person name="Gough J."/>
            <person name="Frith M.C."/>
            <person name="Maeda N."/>
            <person name="Oyama R."/>
            <person name="Ravasi T."/>
            <person name="Lenhard B."/>
            <person name="Wells C."/>
            <person name="Kodzius R."/>
            <person name="Shimokawa K."/>
            <person name="Bajic V.B."/>
            <person name="Brenner S.E."/>
            <person name="Batalov S."/>
            <person name="Forrest A.R."/>
            <person name="Zavolan M."/>
            <person name="Davis M.J."/>
            <person name="Wilming L.G."/>
            <person name="Aidinis V."/>
            <person name="Allen J.E."/>
            <person name="Ambesi-Impiombato A."/>
            <person name="Apweiler R."/>
            <person name="Aturaliya R.N."/>
            <person name="Bailey T.L."/>
            <person name="Bansal M."/>
            <person name="Baxter L."/>
            <person name="Beisel K.W."/>
            <person name="Bersano T."/>
            <person name="Bono H."/>
            <person name="Chalk A.M."/>
            <person name="Chiu K.P."/>
            <person name="Choudhary V."/>
            <person name="Christoffels A."/>
            <person name="Clutterbuck D.R."/>
            <person name="Crowe M.L."/>
            <person name="Dalla E."/>
            <person name="Dalrymple B.P."/>
            <person name="de Bono B."/>
            <person name="Della Gatta G."/>
            <person name="di Bernardo D."/>
            <person name="Down T."/>
            <person name="Engstrom P."/>
            <person name="Fagiolini M."/>
            <person name="Faulkner G."/>
            <person name="Fletcher C.F."/>
            <person name="Fukushima T."/>
            <person name="Furuno M."/>
            <person name="Futaki S."/>
            <person name="Gariboldi M."/>
            <person name="Georgii-Hemming P."/>
            <person name="Gingeras T.R."/>
            <person name="Gojobori T."/>
            <person name="Green R.E."/>
            <person name="Gustincich S."/>
            <person name="Harbers M."/>
            <person name="Hayashi Y."/>
            <person name="Hensch T.K."/>
            <person name="Hirokawa N."/>
            <person name="Hill D."/>
            <person name="Huminiecki L."/>
            <person name="Iacono M."/>
            <person name="Ikeo K."/>
            <person name="Iwama A."/>
            <person name="Ishikawa T."/>
            <person name="Jakt M."/>
            <person name="Kanapin A."/>
            <person name="Katoh M."/>
            <person name="Kawasawa Y."/>
            <person name="Kelso J."/>
            <person name="Kitamura H."/>
            <person name="Kitano H."/>
            <person name="Kollias G."/>
            <person name="Krishnan S.P."/>
            <person name="Kruger A."/>
            <person name="Kummerfeld S.K."/>
            <person name="Kurochkin I.V."/>
            <person name="Lareau L.F."/>
            <person name="Lazarevic D."/>
            <person name="Lipovich L."/>
            <person name="Liu J."/>
            <person name="Liuni S."/>
            <person name="McWilliam S."/>
            <person name="Madan Babu M."/>
            <person name="Madera M."/>
            <person name="Marchionni L."/>
            <person name="Matsuda H."/>
            <person name="Matsuzawa S."/>
            <person name="Miki H."/>
            <person name="Mignone F."/>
            <person name="Miyake S."/>
            <person name="Morris K."/>
            <person name="Mottagui-Tabar S."/>
            <person name="Mulder N."/>
            <person name="Nakano N."/>
            <person name="Nakauchi H."/>
            <person name="Ng P."/>
            <person name="Nilsson R."/>
            <person name="Nishiguchi S."/>
            <person name="Nishikawa S."/>
            <person name="Nori F."/>
            <person name="Ohara O."/>
            <person name="Okazaki Y."/>
            <person name="Orlando V."/>
            <person name="Pang K.C."/>
            <person name="Pavan W.J."/>
            <person name="Pavesi G."/>
            <person name="Pesole G."/>
            <person name="Petrovsky N."/>
            <person name="Piazza S."/>
            <person name="Reed J."/>
            <person name="Reid J.F."/>
            <person name="Ring B.Z."/>
            <person name="Ringwald M."/>
            <person name="Rost B."/>
            <person name="Ruan Y."/>
            <person name="Salzberg S.L."/>
            <person name="Sandelin A."/>
            <person name="Schneider C."/>
            <person name="Schoenbach C."/>
            <person name="Sekiguchi K."/>
            <person name="Semple C.A."/>
            <person name="Seno S."/>
            <person name="Sessa L."/>
            <person name="Sheng Y."/>
            <person name="Shibata Y."/>
            <person name="Shimada H."/>
            <person name="Shimada K."/>
            <person name="Silva D."/>
            <person name="Sinclair B."/>
            <person name="Sperling S."/>
            <person name="Stupka E."/>
            <person name="Sugiura K."/>
            <person name="Sultana R."/>
            <person name="Takenaka Y."/>
            <person name="Taki K."/>
            <person name="Tammoja K."/>
            <person name="Tan S.L."/>
            <person name="Tang S."/>
            <person name="Taylor M.S."/>
            <person name="Tegner J."/>
            <person name="Teichmann S.A."/>
            <person name="Ueda H.R."/>
            <person name="van Nimwegen E."/>
            <person name="Verardo R."/>
            <person name="Wei C.L."/>
            <person name="Yagi K."/>
            <person name="Yamanishi H."/>
            <person name="Zabarovsky E."/>
            <person name="Zhu S."/>
            <person name="Zimmer A."/>
            <person name="Hide W."/>
            <person name="Bult C."/>
            <person name="Grimmond S.M."/>
            <person name="Teasdale R.D."/>
            <person name="Liu E.T."/>
            <person name="Brusic V."/>
            <person name="Quackenbush J."/>
            <person name="Wahlestedt C."/>
            <person name="Mattick J.S."/>
            <person name="Hume D.A."/>
            <person name="Kai C."/>
            <person name="Sasaki D."/>
            <person name="Tomaru Y."/>
            <person name="Fukuda S."/>
            <person name="Kanamori-Katayama M."/>
            <person name="Suzuki M."/>
            <person name="Aoki J."/>
            <person name="Arakawa T."/>
            <person name="Iida J."/>
            <person name="Imamura K."/>
            <person name="Itoh M."/>
            <person name="Kato T."/>
            <person name="Kawaji H."/>
            <person name="Kawagashira N."/>
            <person name="Kawashima T."/>
            <person name="Kojima M."/>
            <person name="Kondo S."/>
            <person name="Konno H."/>
            <person name="Nakano K."/>
            <person name="Ninomiya N."/>
            <person name="Nishio T."/>
            <person name="Okada M."/>
            <person name="Plessy C."/>
            <person name="Shibata K."/>
            <person name="Shiraki T."/>
            <person name="Suzuki S."/>
            <person name="Tagami M."/>
            <person name="Waki K."/>
            <person name="Watahiki A."/>
            <person name="Okamura-Oho Y."/>
            <person name="Suzuki H."/>
            <person name="Kawai J."/>
            <person name="Hayashizaki Y."/>
        </authorList>
    </citation>
    <scope>NUCLEOTIDE SEQUENCE [LARGE SCALE MRNA]</scope>
    <source>
        <strain>C57BL/6J</strain>
        <tissue>Diencephalon</tissue>
        <tissue>Testis</tissue>
    </source>
</reference>
<reference key="2">
    <citation type="journal article" date="2004" name="Genome Res.">
        <title>The status, quality, and expansion of the NIH full-length cDNA project: the Mammalian Gene Collection (MGC).</title>
        <authorList>
            <consortium name="The MGC Project Team"/>
        </authorList>
    </citation>
    <scope>NUCLEOTIDE SEQUENCE [LARGE SCALE MRNA]</scope>
    <source>
        <strain>FVB/N</strain>
        <tissue>Mammary tumor</tissue>
    </source>
</reference>